<keyword id="KW-0963">Cytoplasm</keyword>
<keyword id="KW-0342">GTP-binding</keyword>
<keyword id="KW-0547">Nucleotide-binding</keyword>
<keyword id="KW-1185">Reference proteome</keyword>
<name>SEPT3_DANRE</name>
<comment type="function">
    <text evidence="1">May be involved in cytokinesis.</text>
</comment>
<comment type="subcellular location">
    <subcellularLocation>
        <location evidence="1">Cytoplasm</location>
    </subcellularLocation>
</comment>
<comment type="similarity">
    <text evidence="3">Belongs to the TRAFAC class TrmE-Era-EngA-EngB-Septin-like GTPase superfamily. Septin GTPase family.</text>
</comment>
<gene>
    <name evidence="2" type="primary">septin3</name>
    <name type="synonym">sept3</name>
    <name type="ORF">si:dkey-48a12.1</name>
    <name type="ORF">zgc:110051</name>
</gene>
<proteinExistence type="evidence at transcript level"/>
<evidence type="ECO:0000250" key="1"/>
<evidence type="ECO:0000250" key="2">
    <source>
        <dbReference type="UniProtKB" id="Q9UH03"/>
    </source>
</evidence>
<evidence type="ECO:0000255" key="3">
    <source>
        <dbReference type="PROSITE-ProRule" id="PRU01056"/>
    </source>
</evidence>
<evidence type="ECO:0000256" key="4">
    <source>
        <dbReference type="SAM" id="MobiDB-lite"/>
    </source>
</evidence>
<evidence type="ECO:0000305" key="5"/>
<accession>A2BGU8</accession>
<accession>Q503W1</accession>
<protein>
    <recommendedName>
        <fullName>Neuronal-specific septin-3</fullName>
    </recommendedName>
</protein>
<organism>
    <name type="scientific">Danio rerio</name>
    <name type="common">Zebrafish</name>
    <name type="synonym">Brachydanio rerio</name>
    <dbReference type="NCBI Taxonomy" id="7955"/>
    <lineage>
        <taxon>Eukaryota</taxon>
        <taxon>Metazoa</taxon>
        <taxon>Chordata</taxon>
        <taxon>Craniata</taxon>
        <taxon>Vertebrata</taxon>
        <taxon>Euteleostomi</taxon>
        <taxon>Actinopterygii</taxon>
        <taxon>Neopterygii</taxon>
        <taxon>Teleostei</taxon>
        <taxon>Ostariophysi</taxon>
        <taxon>Cypriniformes</taxon>
        <taxon>Danionidae</taxon>
        <taxon>Danioninae</taxon>
        <taxon>Danio</taxon>
    </lineage>
</organism>
<reference key="1">
    <citation type="journal article" date="2013" name="Nature">
        <title>The zebrafish reference genome sequence and its relationship to the human genome.</title>
        <authorList>
            <person name="Howe K."/>
            <person name="Clark M.D."/>
            <person name="Torroja C.F."/>
            <person name="Torrance J."/>
            <person name="Berthelot C."/>
            <person name="Muffato M."/>
            <person name="Collins J.E."/>
            <person name="Humphray S."/>
            <person name="McLaren K."/>
            <person name="Matthews L."/>
            <person name="McLaren S."/>
            <person name="Sealy I."/>
            <person name="Caccamo M."/>
            <person name="Churcher C."/>
            <person name="Scott C."/>
            <person name="Barrett J.C."/>
            <person name="Koch R."/>
            <person name="Rauch G.J."/>
            <person name="White S."/>
            <person name="Chow W."/>
            <person name="Kilian B."/>
            <person name="Quintais L.T."/>
            <person name="Guerra-Assuncao J.A."/>
            <person name="Zhou Y."/>
            <person name="Gu Y."/>
            <person name="Yen J."/>
            <person name="Vogel J.H."/>
            <person name="Eyre T."/>
            <person name="Redmond S."/>
            <person name="Banerjee R."/>
            <person name="Chi J."/>
            <person name="Fu B."/>
            <person name="Langley E."/>
            <person name="Maguire S.F."/>
            <person name="Laird G.K."/>
            <person name="Lloyd D."/>
            <person name="Kenyon E."/>
            <person name="Donaldson S."/>
            <person name="Sehra H."/>
            <person name="Almeida-King J."/>
            <person name="Loveland J."/>
            <person name="Trevanion S."/>
            <person name="Jones M."/>
            <person name="Quail M."/>
            <person name="Willey D."/>
            <person name="Hunt A."/>
            <person name="Burton J."/>
            <person name="Sims S."/>
            <person name="McLay K."/>
            <person name="Plumb B."/>
            <person name="Davis J."/>
            <person name="Clee C."/>
            <person name="Oliver K."/>
            <person name="Clark R."/>
            <person name="Riddle C."/>
            <person name="Elliot D."/>
            <person name="Threadgold G."/>
            <person name="Harden G."/>
            <person name="Ware D."/>
            <person name="Begum S."/>
            <person name="Mortimore B."/>
            <person name="Kerry G."/>
            <person name="Heath P."/>
            <person name="Phillimore B."/>
            <person name="Tracey A."/>
            <person name="Corby N."/>
            <person name="Dunn M."/>
            <person name="Johnson C."/>
            <person name="Wood J."/>
            <person name="Clark S."/>
            <person name="Pelan S."/>
            <person name="Griffiths G."/>
            <person name="Smith M."/>
            <person name="Glithero R."/>
            <person name="Howden P."/>
            <person name="Barker N."/>
            <person name="Lloyd C."/>
            <person name="Stevens C."/>
            <person name="Harley J."/>
            <person name="Holt K."/>
            <person name="Panagiotidis G."/>
            <person name="Lovell J."/>
            <person name="Beasley H."/>
            <person name="Henderson C."/>
            <person name="Gordon D."/>
            <person name="Auger K."/>
            <person name="Wright D."/>
            <person name="Collins J."/>
            <person name="Raisen C."/>
            <person name="Dyer L."/>
            <person name="Leung K."/>
            <person name="Robertson L."/>
            <person name="Ambridge K."/>
            <person name="Leongamornlert D."/>
            <person name="McGuire S."/>
            <person name="Gilderthorp R."/>
            <person name="Griffiths C."/>
            <person name="Manthravadi D."/>
            <person name="Nichol S."/>
            <person name="Barker G."/>
            <person name="Whitehead S."/>
            <person name="Kay M."/>
            <person name="Brown J."/>
            <person name="Murnane C."/>
            <person name="Gray E."/>
            <person name="Humphries M."/>
            <person name="Sycamore N."/>
            <person name="Barker D."/>
            <person name="Saunders D."/>
            <person name="Wallis J."/>
            <person name="Babbage A."/>
            <person name="Hammond S."/>
            <person name="Mashreghi-Mohammadi M."/>
            <person name="Barr L."/>
            <person name="Martin S."/>
            <person name="Wray P."/>
            <person name="Ellington A."/>
            <person name="Matthews N."/>
            <person name="Ellwood M."/>
            <person name="Woodmansey R."/>
            <person name="Clark G."/>
            <person name="Cooper J."/>
            <person name="Tromans A."/>
            <person name="Grafham D."/>
            <person name="Skuce C."/>
            <person name="Pandian R."/>
            <person name="Andrews R."/>
            <person name="Harrison E."/>
            <person name="Kimberley A."/>
            <person name="Garnett J."/>
            <person name="Fosker N."/>
            <person name="Hall R."/>
            <person name="Garner P."/>
            <person name="Kelly D."/>
            <person name="Bird C."/>
            <person name="Palmer S."/>
            <person name="Gehring I."/>
            <person name="Berger A."/>
            <person name="Dooley C.M."/>
            <person name="Ersan-Urun Z."/>
            <person name="Eser C."/>
            <person name="Geiger H."/>
            <person name="Geisler M."/>
            <person name="Karotki L."/>
            <person name="Kirn A."/>
            <person name="Konantz J."/>
            <person name="Konantz M."/>
            <person name="Oberlander M."/>
            <person name="Rudolph-Geiger S."/>
            <person name="Teucke M."/>
            <person name="Lanz C."/>
            <person name="Raddatz G."/>
            <person name="Osoegawa K."/>
            <person name="Zhu B."/>
            <person name="Rapp A."/>
            <person name="Widaa S."/>
            <person name="Langford C."/>
            <person name="Yang F."/>
            <person name="Schuster S.C."/>
            <person name="Carter N.P."/>
            <person name="Harrow J."/>
            <person name="Ning Z."/>
            <person name="Herrero J."/>
            <person name="Searle S.M."/>
            <person name="Enright A."/>
            <person name="Geisler R."/>
            <person name="Plasterk R.H."/>
            <person name="Lee C."/>
            <person name="Westerfield M."/>
            <person name="de Jong P.J."/>
            <person name="Zon L.I."/>
            <person name="Postlethwait J.H."/>
            <person name="Nusslein-Volhard C."/>
            <person name="Hubbard T.J."/>
            <person name="Roest Crollius H."/>
            <person name="Rogers J."/>
            <person name="Stemple D.L."/>
        </authorList>
    </citation>
    <scope>NUCLEOTIDE SEQUENCE [LARGE SCALE GENOMIC DNA]</scope>
    <source>
        <strain>Tuebingen</strain>
    </source>
</reference>
<reference key="2">
    <citation type="submission" date="2005-05" db="EMBL/GenBank/DDBJ databases">
        <authorList>
            <consortium name="NIH - Zebrafish Gene Collection (ZGC) project"/>
        </authorList>
    </citation>
    <scope>NUCLEOTIDE SEQUENCE [LARGE SCALE MRNA]</scope>
    <source>
        <tissue>Larval eye</tissue>
    </source>
</reference>
<sequence>MSEIVPPEVRPKPAVPAKPSHVAPPSSAPFVPSPQGTGGEGQGSGRGSALLGYIGIDTIIEQMRKKTMKAGFDFNIMVVGQSGLGKSTLVNTLFKSQVSRRSTSWSRDEKIPKTVEIKSVSHVIEEGGVKMKLTVVDTPGFGDQINNDNCWEPISKHINEQYEKFLKEEVNIARKKRIPDTRVHCCLYFISPTGHSLRQLDIEFMKHLSRVVNIIPVIAKSDTLTPEEKTEFKQRVRKELEVCGIECYPQKEFDEDMEDKSDNDKIRETMPFAVVGSDKEYQVNGKRVLGRKTAWGVVEVENPNHCEFSLLRDFMIRSHLQDLKEVTHNIHYETYRAKRLNDNGGLHPISSSGHDTQESNL</sequence>
<dbReference type="EMBL" id="BX511120">
    <property type="protein sequence ID" value="CAM14019.1"/>
    <property type="molecule type" value="Genomic_DNA"/>
</dbReference>
<dbReference type="EMBL" id="BX537268">
    <property type="protein sequence ID" value="CAM14019.1"/>
    <property type="status" value="JOINED"/>
    <property type="molecule type" value="Genomic_DNA"/>
</dbReference>
<dbReference type="EMBL" id="BX537268">
    <property type="protein sequence ID" value="CAM16109.1"/>
    <property type="molecule type" value="Genomic_DNA"/>
</dbReference>
<dbReference type="EMBL" id="BX511120">
    <property type="protein sequence ID" value="CAM16109.1"/>
    <property type="status" value="JOINED"/>
    <property type="molecule type" value="Genomic_DNA"/>
</dbReference>
<dbReference type="EMBL" id="BC095158">
    <property type="protein sequence ID" value="AAH95158.1"/>
    <property type="molecule type" value="mRNA"/>
</dbReference>
<dbReference type="RefSeq" id="NP_001019589.2">
    <property type="nucleotide sequence ID" value="NM_001024418.2"/>
</dbReference>
<dbReference type="RefSeq" id="XP_005160097.1">
    <property type="nucleotide sequence ID" value="XM_005160040.5"/>
</dbReference>
<dbReference type="SMR" id="A2BGU8"/>
<dbReference type="FunCoup" id="A2BGU8">
    <property type="interactions" value="172"/>
</dbReference>
<dbReference type="STRING" id="7955.ENSDARP00000044056"/>
<dbReference type="PaxDb" id="7955-ENSDARP00000044056"/>
<dbReference type="PeptideAtlas" id="A2BGU8"/>
<dbReference type="Ensembl" id="ENSDART00000044057">
    <property type="protein sequence ID" value="ENSDARP00000044056"/>
    <property type="gene ID" value="ENSDARG00000030656"/>
</dbReference>
<dbReference type="Ensembl" id="ENSDART00000181757">
    <property type="protein sequence ID" value="ENSDARP00000146488"/>
    <property type="gene ID" value="ENSDARG00000030656"/>
</dbReference>
<dbReference type="GeneID" id="554123"/>
<dbReference type="KEGG" id="dre:554123"/>
<dbReference type="AGR" id="ZFIN:ZDB-GENE-050522-375"/>
<dbReference type="CTD" id="55964"/>
<dbReference type="ZFIN" id="ZDB-GENE-050522-375">
    <property type="gene designation" value="septin3"/>
</dbReference>
<dbReference type="eggNOG" id="KOG1547">
    <property type="taxonomic scope" value="Eukaryota"/>
</dbReference>
<dbReference type="HOGENOM" id="CLU_017718_7_1_1"/>
<dbReference type="InParanoid" id="A2BGU8"/>
<dbReference type="OMA" id="QCEFVYL"/>
<dbReference type="OrthoDB" id="416553at2759"/>
<dbReference type="PhylomeDB" id="A2BGU8"/>
<dbReference type="TreeFam" id="TF101078"/>
<dbReference type="PRO" id="PR:A2BGU8"/>
<dbReference type="Proteomes" id="UP000000437">
    <property type="component" value="Chromosome 1"/>
</dbReference>
<dbReference type="Bgee" id="ENSDARG00000030656">
    <property type="expression patterns" value="Expressed in brain and 80 other cell types or tissues"/>
</dbReference>
<dbReference type="GO" id="GO:0032153">
    <property type="term" value="C:cell division site"/>
    <property type="evidence" value="ECO:0000318"/>
    <property type="project" value="GO_Central"/>
</dbReference>
<dbReference type="GO" id="GO:0015630">
    <property type="term" value="C:microtubule cytoskeleton"/>
    <property type="evidence" value="ECO:0000318"/>
    <property type="project" value="GO_Central"/>
</dbReference>
<dbReference type="GO" id="GO:0098793">
    <property type="term" value="C:presynapse"/>
    <property type="evidence" value="ECO:0000250"/>
    <property type="project" value="UniProtKB"/>
</dbReference>
<dbReference type="GO" id="GO:0031105">
    <property type="term" value="C:septin complex"/>
    <property type="evidence" value="ECO:0000250"/>
    <property type="project" value="UniProtKB"/>
</dbReference>
<dbReference type="GO" id="GO:0005940">
    <property type="term" value="C:septin ring"/>
    <property type="evidence" value="ECO:0000318"/>
    <property type="project" value="GO_Central"/>
</dbReference>
<dbReference type="GO" id="GO:0005525">
    <property type="term" value="F:GTP binding"/>
    <property type="evidence" value="ECO:0007669"/>
    <property type="project" value="UniProtKB-KW"/>
</dbReference>
<dbReference type="GO" id="GO:0003924">
    <property type="term" value="F:GTPase activity"/>
    <property type="evidence" value="ECO:0000318"/>
    <property type="project" value="GO_Central"/>
</dbReference>
<dbReference type="GO" id="GO:0060090">
    <property type="term" value="F:molecular adaptor activity"/>
    <property type="evidence" value="ECO:0000318"/>
    <property type="project" value="GO_Central"/>
</dbReference>
<dbReference type="GO" id="GO:0061640">
    <property type="term" value="P:cytoskeleton-dependent cytokinesis"/>
    <property type="evidence" value="ECO:0000318"/>
    <property type="project" value="GO_Central"/>
</dbReference>
<dbReference type="GO" id="GO:0008104">
    <property type="term" value="P:protein localization"/>
    <property type="evidence" value="ECO:0000318"/>
    <property type="project" value="GO_Central"/>
</dbReference>
<dbReference type="CDD" id="cd01850">
    <property type="entry name" value="CDC_Septin"/>
    <property type="match status" value="1"/>
</dbReference>
<dbReference type="FunFam" id="3.40.50.300:FF:000387">
    <property type="entry name" value="neuronal-specific septin-3 isoform X1"/>
    <property type="match status" value="1"/>
</dbReference>
<dbReference type="Gene3D" id="3.40.50.300">
    <property type="entry name" value="P-loop containing nucleotide triphosphate hydrolases"/>
    <property type="match status" value="1"/>
</dbReference>
<dbReference type="InterPro" id="IPR030379">
    <property type="entry name" value="G_SEPTIN_dom"/>
</dbReference>
<dbReference type="InterPro" id="IPR027417">
    <property type="entry name" value="P-loop_NTPase"/>
</dbReference>
<dbReference type="InterPro" id="IPR016491">
    <property type="entry name" value="Septin"/>
</dbReference>
<dbReference type="InterPro" id="IPR008114">
    <property type="entry name" value="Septin3"/>
</dbReference>
<dbReference type="PANTHER" id="PTHR18884">
    <property type="entry name" value="SEPTIN"/>
    <property type="match status" value="1"/>
</dbReference>
<dbReference type="Pfam" id="PF00735">
    <property type="entry name" value="Septin"/>
    <property type="match status" value="1"/>
</dbReference>
<dbReference type="PIRSF" id="PIRSF006698">
    <property type="entry name" value="Septin"/>
    <property type="match status" value="1"/>
</dbReference>
<dbReference type="PRINTS" id="PR01741">
    <property type="entry name" value="SEPTIN3"/>
</dbReference>
<dbReference type="SUPFAM" id="SSF52540">
    <property type="entry name" value="P-loop containing nucleoside triphosphate hydrolases"/>
    <property type="match status" value="1"/>
</dbReference>
<dbReference type="PROSITE" id="PS51719">
    <property type="entry name" value="G_SEPTIN"/>
    <property type="match status" value="1"/>
</dbReference>
<feature type="chain" id="PRO_0000287230" description="Neuronal-specific septin-3">
    <location>
        <begin position="1"/>
        <end position="361"/>
    </location>
</feature>
<feature type="domain" description="Septin-type G" evidence="3">
    <location>
        <begin position="70"/>
        <end position="342"/>
    </location>
</feature>
<feature type="region of interest" description="Disordered" evidence="4">
    <location>
        <begin position="1"/>
        <end position="46"/>
    </location>
</feature>
<feature type="region of interest" description="G1 motif" evidence="3">
    <location>
        <begin position="80"/>
        <end position="87"/>
    </location>
</feature>
<feature type="region of interest" description="G3 motif" evidence="3">
    <location>
        <begin position="137"/>
        <end position="140"/>
    </location>
</feature>
<feature type="region of interest" description="G4 motif" evidence="3">
    <location>
        <begin position="219"/>
        <end position="222"/>
    </location>
</feature>
<feature type="region of interest" description="Disordered" evidence="4">
    <location>
        <begin position="341"/>
        <end position="361"/>
    </location>
</feature>
<feature type="compositionally biased region" description="Low complexity" evidence="4">
    <location>
        <begin position="15"/>
        <end position="34"/>
    </location>
</feature>
<feature type="compositionally biased region" description="Gly residues" evidence="4">
    <location>
        <begin position="36"/>
        <end position="46"/>
    </location>
</feature>
<feature type="compositionally biased region" description="Polar residues" evidence="4">
    <location>
        <begin position="349"/>
        <end position="361"/>
    </location>
</feature>
<feature type="binding site" evidence="2">
    <location>
        <begin position="80"/>
        <end position="87"/>
    </location>
    <ligand>
        <name>GTP</name>
        <dbReference type="ChEBI" id="CHEBI:37565"/>
    </ligand>
</feature>
<feature type="binding site" evidence="2">
    <location>
        <position position="114"/>
    </location>
    <ligand>
        <name>GTP</name>
        <dbReference type="ChEBI" id="CHEBI:37565"/>
    </ligand>
</feature>
<feature type="binding site" evidence="2">
    <location>
        <begin position="220"/>
        <end position="228"/>
    </location>
    <ligand>
        <name>GTP</name>
        <dbReference type="ChEBI" id="CHEBI:37565"/>
    </ligand>
</feature>
<feature type="binding site" evidence="2">
    <location>
        <position position="276"/>
    </location>
    <ligand>
        <name>GTP</name>
        <dbReference type="ChEBI" id="CHEBI:37565"/>
    </ligand>
</feature>
<feature type="binding site" evidence="2">
    <location>
        <position position="291"/>
    </location>
    <ligand>
        <name>GTP</name>
        <dbReference type="ChEBI" id="CHEBI:37565"/>
    </ligand>
</feature>
<feature type="sequence conflict" description="In Ref. 2; AAH95158." evidence="5" ref="2">
    <original>V</original>
    <variation>E</variation>
    <location>
        <position position="22"/>
    </location>
</feature>